<reference key="1">
    <citation type="journal article" date="2006" name="PLoS Genet.">
        <title>The complete genome sequence and comparative genome analysis of the high pathogenicity Yersinia enterocolitica strain 8081.</title>
        <authorList>
            <person name="Thomson N.R."/>
            <person name="Howard S."/>
            <person name="Wren B.W."/>
            <person name="Holden M.T.G."/>
            <person name="Crossman L."/>
            <person name="Challis G.L."/>
            <person name="Churcher C."/>
            <person name="Mungall K."/>
            <person name="Brooks K."/>
            <person name="Chillingworth T."/>
            <person name="Feltwell T."/>
            <person name="Abdellah Z."/>
            <person name="Hauser H."/>
            <person name="Jagels K."/>
            <person name="Maddison M."/>
            <person name="Moule S."/>
            <person name="Sanders M."/>
            <person name="Whitehead S."/>
            <person name="Quail M.A."/>
            <person name="Dougan G."/>
            <person name="Parkhill J."/>
            <person name="Prentice M.B."/>
        </authorList>
    </citation>
    <scope>NUCLEOTIDE SEQUENCE [LARGE SCALE GENOMIC DNA]</scope>
    <source>
        <strain>NCTC 13174 / 8081</strain>
    </source>
</reference>
<name>RL18_YERE8</name>
<protein>
    <recommendedName>
        <fullName evidence="1">Large ribosomal subunit protein uL18</fullName>
    </recommendedName>
    <alternativeName>
        <fullName evidence="2">50S ribosomal protein L18</fullName>
    </alternativeName>
</protein>
<dbReference type="EMBL" id="AM286415">
    <property type="protein sequence ID" value="CAL13926.1"/>
    <property type="molecule type" value="Genomic_DNA"/>
</dbReference>
<dbReference type="RefSeq" id="WP_004391413.1">
    <property type="nucleotide sequence ID" value="NC_008800.1"/>
</dbReference>
<dbReference type="RefSeq" id="YP_001008052.1">
    <property type="nucleotide sequence ID" value="NC_008800.1"/>
</dbReference>
<dbReference type="SMR" id="A1JS13"/>
<dbReference type="GeneID" id="93971457"/>
<dbReference type="KEGG" id="yen:YE3907"/>
<dbReference type="PATRIC" id="fig|393305.7.peg.4157"/>
<dbReference type="eggNOG" id="COG0256">
    <property type="taxonomic scope" value="Bacteria"/>
</dbReference>
<dbReference type="HOGENOM" id="CLU_098841_0_1_6"/>
<dbReference type="OrthoDB" id="9810939at2"/>
<dbReference type="Proteomes" id="UP000000642">
    <property type="component" value="Chromosome"/>
</dbReference>
<dbReference type="GO" id="GO:0022625">
    <property type="term" value="C:cytosolic large ribosomal subunit"/>
    <property type="evidence" value="ECO:0007669"/>
    <property type="project" value="TreeGrafter"/>
</dbReference>
<dbReference type="GO" id="GO:0008097">
    <property type="term" value="F:5S rRNA binding"/>
    <property type="evidence" value="ECO:0007669"/>
    <property type="project" value="TreeGrafter"/>
</dbReference>
<dbReference type="GO" id="GO:0003735">
    <property type="term" value="F:structural constituent of ribosome"/>
    <property type="evidence" value="ECO:0007669"/>
    <property type="project" value="InterPro"/>
</dbReference>
<dbReference type="GO" id="GO:0006412">
    <property type="term" value="P:translation"/>
    <property type="evidence" value="ECO:0007669"/>
    <property type="project" value="UniProtKB-UniRule"/>
</dbReference>
<dbReference type="CDD" id="cd00432">
    <property type="entry name" value="Ribosomal_L18_L5e"/>
    <property type="match status" value="1"/>
</dbReference>
<dbReference type="FunFam" id="3.30.420.100:FF:000001">
    <property type="entry name" value="50S ribosomal protein L18"/>
    <property type="match status" value="1"/>
</dbReference>
<dbReference type="Gene3D" id="3.30.420.100">
    <property type="match status" value="1"/>
</dbReference>
<dbReference type="HAMAP" id="MF_01337_B">
    <property type="entry name" value="Ribosomal_uL18_B"/>
    <property type="match status" value="1"/>
</dbReference>
<dbReference type="InterPro" id="IPR004389">
    <property type="entry name" value="Ribosomal_uL18_bac-type"/>
</dbReference>
<dbReference type="InterPro" id="IPR005484">
    <property type="entry name" value="Ribosomal_uL18_bac/euk"/>
</dbReference>
<dbReference type="NCBIfam" id="TIGR00060">
    <property type="entry name" value="L18_bact"/>
    <property type="match status" value="1"/>
</dbReference>
<dbReference type="PANTHER" id="PTHR12899">
    <property type="entry name" value="39S RIBOSOMAL PROTEIN L18, MITOCHONDRIAL"/>
    <property type="match status" value="1"/>
</dbReference>
<dbReference type="PANTHER" id="PTHR12899:SF3">
    <property type="entry name" value="LARGE RIBOSOMAL SUBUNIT PROTEIN UL18M"/>
    <property type="match status" value="1"/>
</dbReference>
<dbReference type="Pfam" id="PF00861">
    <property type="entry name" value="Ribosomal_L18p"/>
    <property type="match status" value="1"/>
</dbReference>
<dbReference type="SUPFAM" id="SSF53137">
    <property type="entry name" value="Translational machinery components"/>
    <property type="match status" value="1"/>
</dbReference>
<gene>
    <name evidence="1" type="primary">rplR</name>
    <name type="ordered locus">YE3907</name>
</gene>
<sequence>MDKKAARIRRATRARRKLKELGATRLVVHRTPRHIYAQVIAPNGSEILVAASTVEKAINEQLKYAGNKDAAAAVGKAVAERALEKGITKVSFDRSGFQYHGRVQALADAAREAGLQF</sequence>
<keyword id="KW-0687">Ribonucleoprotein</keyword>
<keyword id="KW-0689">Ribosomal protein</keyword>
<keyword id="KW-0694">RNA-binding</keyword>
<keyword id="KW-0699">rRNA-binding</keyword>
<comment type="function">
    <text evidence="1">This is one of the proteins that bind and probably mediate the attachment of the 5S RNA into the large ribosomal subunit, where it forms part of the central protuberance.</text>
</comment>
<comment type="subunit">
    <text evidence="1">Part of the 50S ribosomal subunit; part of the 5S rRNA/L5/L18/L25 subcomplex. Contacts the 5S and 23S rRNAs.</text>
</comment>
<comment type="similarity">
    <text evidence="1">Belongs to the universal ribosomal protein uL18 family.</text>
</comment>
<feature type="chain" id="PRO_1000053138" description="Large ribosomal subunit protein uL18">
    <location>
        <begin position="1"/>
        <end position="117"/>
    </location>
</feature>
<evidence type="ECO:0000255" key="1">
    <source>
        <dbReference type="HAMAP-Rule" id="MF_01337"/>
    </source>
</evidence>
<evidence type="ECO:0000305" key="2"/>
<proteinExistence type="inferred from homology"/>
<accession>A1JS13</accession>
<organism>
    <name type="scientific">Yersinia enterocolitica serotype O:8 / biotype 1B (strain NCTC 13174 / 8081)</name>
    <dbReference type="NCBI Taxonomy" id="393305"/>
    <lineage>
        <taxon>Bacteria</taxon>
        <taxon>Pseudomonadati</taxon>
        <taxon>Pseudomonadota</taxon>
        <taxon>Gammaproteobacteria</taxon>
        <taxon>Enterobacterales</taxon>
        <taxon>Yersiniaceae</taxon>
        <taxon>Yersinia</taxon>
    </lineage>
</organism>